<sequence>MALNDCFLLNLEVDHFMHCNISSHSADLPVNDDWSHPGILYVIPAVYGVIILIGLIGNITLIKIFCTVKSMRNVPNLFISSLALGDLLLLITCAPVDASRYLADRWLFGRIGCKLIPFIQLTSVGVSVFTLTALSADRYKAIVRPMDIQASHALMKICLKAAFIWIISMLLAIPEAVFSDLHPFHEESTNQTFISCAPYPHSNELHPKIHSMASFLVFYVIPLSIISVYYYFIAKNLIQSAYNLPVEGNIHVKKQIESRKRLAKTVLVFVGLFAFCWLPNHVIYLYRSYHYSEVDTSMLHFVTSICARLLAFTNSCVNPFALYLLSKSFRKQFNTQLLCCQPGLIIRSHSTGRSTTCMTSLKSTNPSVATFSLINGNICHERYV</sequence>
<proteinExistence type="evidence at protein level"/>
<comment type="function">
    <text evidence="3 7">Receptor for gastrin-releasing peptide (GRP) (PubMed:1655761). Signals via association with G proteins that activate a phosphatidylinositol-calcium second messenger system, resulting in Akt phosphorylation. Contributes to the regulation of food intake. Contributes to the perception of prurient stimuli and transmission of itch signals in the spinal cord that promote scratching behavior, but does not play a role in the perception of pain. Contributes primarily to nonhistaminergic itch sensation. In one study, shown to act in the amygdala as part of an inhibitory network which inhibits memory specifically related to learned fear (By similarity). In another study, shown to contribute to disinhibition of glutamatergic cells in the auditory cortex via signaling on vasoactive intestinal peptide-expressing cells which leads to enhanced auditory fear memories (By similarity). Contributes to the induction of sighing through signaling in the pre-Botzinger complex, a cluster of several thousand neurons in the ventrolateral medulla responsible for inspiration during respiratory activity (By similarity).</text>
</comment>
<comment type="subcellular location">
    <subcellularLocation>
        <location evidence="7">Cell membrane</location>
        <topology evidence="4">Multi-pass membrane protein</topology>
    </subcellularLocation>
</comment>
<comment type="tissue specificity">
    <text evidence="6 8">Highly expressed in pancreas (PubMed:11245983). Also expressed in stomach, adrenal cortex and brain (PubMed:11245983). In brain, expressed in cells throughout the cortex (PubMed:34610277).</text>
</comment>
<comment type="similarity">
    <text evidence="5">Belongs to the G-protein coupled receptor 1 family.</text>
</comment>
<gene>
    <name type="primary">GRPR</name>
</gene>
<evidence type="ECO:0000250" key="1"/>
<evidence type="ECO:0000250" key="2">
    <source>
        <dbReference type="UniProtKB" id="O54799"/>
    </source>
</evidence>
<evidence type="ECO:0000250" key="3">
    <source>
        <dbReference type="UniProtKB" id="P21729"/>
    </source>
</evidence>
<evidence type="ECO:0000255" key="4"/>
<evidence type="ECO:0000255" key="5">
    <source>
        <dbReference type="PROSITE-ProRule" id="PRU00521"/>
    </source>
</evidence>
<evidence type="ECO:0000269" key="6">
    <source>
    </source>
</evidence>
<evidence type="ECO:0000269" key="7">
    <source>
    </source>
</evidence>
<evidence type="ECO:0000269" key="8">
    <source>
    </source>
</evidence>
<evidence type="ECO:0007829" key="9">
    <source>
        <dbReference type="PDB" id="7W3Z"/>
    </source>
</evidence>
<evidence type="ECO:0007829" key="10">
    <source>
        <dbReference type="PDB" id="7W41"/>
    </source>
</evidence>
<keyword id="KW-0002">3D-structure</keyword>
<keyword id="KW-1003">Cell membrane</keyword>
<keyword id="KW-1015">Disulfide bond</keyword>
<keyword id="KW-0297">G-protein coupled receptor</keyword>
<keyword id="KW-0325">Glycoprotein</keyword>
<keyword id="KW-0449">Lipoprotein</keyword>
<keyword id="KW-0472">Membrane</keyword>
<keyword id="KW-0564">Palmitate</keyword>
<keyword id="KW-0597">Phosphoprotein</keyword>
<keyword id="KW-1267">Proteomics identification</keyword>
<keyword id="KW-0675">Receptor</keyword>
<keyword id="KW-1185">Reference proteome</keyword>
<keyword id="KW-0807">Transducer</keyword>
<keyword id="KW-0812">Transmembrane</keyword>
<keyword id="KW-1133">Transmembrane helix</keyword>
<dbReference type="EMBL" id="M73481">
    <property type="protein sequence ID" value="AAA88050.1"/>
    <property type="molecule type" value="mRNA"/>
</dbReference>
<dbReference type="EMBL" id="AF293323">
    <property type="protein sequence ID" value="AAL96377.1"/>
    <property type="molecule type" value="Genomic_DNA"/>
</dbReference>
<dbReference type="EMBL" id="AF293321">
    <property type="protein sequence ID" value="AAL96377.1"/>
    <property type="status" value="JOINED"/>
    <property type="molecule type" value="Genomic_DNA"/>
</dbReference>
<dbReference type="EMBL" id="AF293322">
    <property type="protein sequence ID" value="AAL96377.1"/>
    <property type="status" value="JOINED"/>
    <property type="molecule type" value="Genomic_DNA"/>
</dbReference>
<dbReference type="EMBL" id="AK313588">
    <property type="protein sequence ID" value="BAG36357.1"/>
    <property type="molecule type" value="mRNA"/>
</dbReference>
<dbReference type="EMBL" id="CH471074">
    <property type="protein sequence ID" value="EAW98909.1"/>
    <property type="molecule type" value="Genomic_DNA"/>
</dbReference>
<dbReference type="EMBL" id="BC074733">
    <property type="protein sequence ID" value="AAH74733.1"/>
    <property type="molecule type" value="mRNA"/>
</dbReference>
<dbReference type="CCDS" id="CCDS14174.1"/>
<dbReference type="PIR" id="A41007">
    <property type="entry name" value="A41007"/>
</dbReference>
<dbReference type="RefSeq" id="NP_005305.1">
    <property type="nucleotide sequence ID" value="NM_005314.3"/>
</dbReference>
<dbReference type="PDB" id="7W3Z">
    <property type="method" value="EM"/>
    <property type="resolution" value="3.00 A"/>
    <property type="chains" value="A=13-341"/>
</dbReference>
<dbReference type="PDB" id="7W40">
    <property type="method" value="EM"/>
    <property type="resolution" value="3.00 A"/>
    <property type="chains" value="A=13-341"/>
</dbReference>
<dbReference type="PDB" id="7W41">
    <property type="method" value="X-ray"/>
    <property type="resolution" value="2.95 A"/>
    <property type="chains" value="A=38-241, A=254-337"/>
</dbReference>
<dbReference type="PDB" id="8H0Q">
    <property type="method" value="EM"/>
    <property type="resolution" value="3.30 A"/>
    <property type="chains" value="R=1-384"/>
</dbReference>
<dbReference type="PDBsum" id="7W3Z"/>
<dbReference type="PDBsum" id="7W40"/>
<dbReference type="PDBsum" id="7W41"/>
<dbReference type="PDBsum" id="8H0Q"/>
<dbReference type="EMDB" id="EMD-32297"/>
<dbReference type="EMDB" id="EMD-32298"/>
<dbReference type="EMDB" id="EMD-34414"/>
<dbReference type="SMR" id="P30550"/>
<dbReference type="BioGRID" id="109181">
    <property type="interactions" value="81"/>
</dbReference>
<dbReference type="FunCoup" id="P30550">
    <property type="interactions" value="1127"/>
</dbReference>
<dbReference type="IntAct" id="P30550">
    <property type="interactions" value="58"/>
</dbReference>
<dbReference type="STRING" id="9606.ENSP00000369643"/>
<dbReference type="BindingDB" id="P30550"/>
<dbReference type="ChEMBL" id="CHEMBL4959"/>
<dbReference type="DrugBank" id="DB11724">
    <property type="generic name" value="Bombesin"/>
</dbReference>
<dbReference type="GuidetoPHARMACOLOGY" id="39"/>
<dbReference type="GlyCosmos" id="P30550">
    <property type="glycosylation" value="1 site, No reported glycans"/>
</dbReference>
<dbReference type="GlyGen" id="P30550">
    <property type="glycosylation" value="1 site"/>
</dbReference>
<dbReference type="iPTMnet" id="P30550"/>
<dbReference type="PhosphoSitePlus" id="P30550"/>
<dbReference type="BioMuta" id="GRPR"/>
<dbReference type="DMDM" id="232185"/>
<dbReference type="MassIVE" id="P30550"/>
<dbReference type="PaxDb" id="9606-ENSP00000369643"/>
<dbReference type="PeptideAtlas" id="P30550"/>
<dbReference type="ProteomicsDB" id="54720"/>
<dbReference type="Antibodypedia" id="23994">
    <property type="antibodies" value="278 antibodies from 30 providers"/>
</dbReference>
<dbReference type="DNASU" id="2925"/>
<dbReference type="Ensembl" id="ENST00000380289.3">
    <property type="protein sequence ID" value="ENSP00000369643.2"/>
    <property type="gene ID" value="ENSG00000126010.6"/>
</dbReference>
<dbReference type="GeneID" id="2925"/>
<dbReference type="KEGG" id="hsa:2925"/>
<dbReference type="MANE-Select" id="ENST00000380289.3">
    <property type="protein sequence ID" value="ENSP00000369643.2"/>
    <property type="RefSeq nucleotide sequence ID" value="NM_005314.3"/>
    <property type="RefSeq protein sequence ID" value="NP_005305.1"/>
</dbReference>
<dbReference type="AGR" id="HGNC:4609"/>
<dbReference type="CTD" id="2925"/>
<dbReference type="DisGeNET" id="2925"/>
<dbReference type="GeneCards" id="GRPR"/>
<dbReference type="HGNC" id="HGNC:4609">
    <property type="gene designation" value="GRPR"/>
</dbReference>
<dbReference type="HPA" id="ENSG00000126010">
    <property type="expression patterns" value="Tissue enriched (pancreas)"/>
</dbReference>
<dbReference type="MalaCards" id="GRPR"/>
<dbReference type="MIM" id="305670">
    <property type="type" value="gene"/>
</dbReference>
<dbReference type="neXtProt" id="NX_P30550"/>
<dbReference type="OpenTargets" id="ENSG00000126010"/>
<dbReference type="PharmGKB" id="PA29002"/>
<dbReference type="VEuPathDB" id="HostDB:ENSG00000126010"/>
<dbReference type="eggNOG" id="KOG3656">
    <property type="taxonomic scope" value="Eukaryota"/>
</dbReference>
<dbReference type="GeneTree" id="ENSGT01120000271837"/>
<dbReference type="HOGENOM" id="CLU_009579_6_2_1"/>
<dbReference type="InParanoid" id="P30550"/>
<dbReference type="OMA" id="HAFTTSH"/>
<dbReference type="OrthoDB" id="10049706at2759"/>
<dbReference type="PAN-GO" id="P30550">
    <property type="GO annotations" value="3 GO annotations based on evolutionary models"/>
</dbReference>
<dbReference type="PhylomeDB" id="P30550"/>
<dbReference type="TreeFam" id="TF331292"/>
<dbReference type="PathwayCommons" id="P30550"/>
<dbReference type="Reactome" id="R-HSA-375276">
    <property type="pathway name" value="Peptide ligand-binding receptors"/>
</dbReference>
<dbReference type="Reactome" id="R-HSA-416476">
    <property type="pathway name" value="G alpha (q) signalling events"/>
</dbReference>
<dbReference type="SignaLink" id="P30550"/>
<dbReference type="SIGNOR" id="P30550"/>
<dbReference type="BioGRID-ORCS" id="2925">
    <property type="hits" value="9 hits in 769 CRISPR screens"/>
</dbReference>
<dbReference type="GeneWiki" id="Gastrin-releasing_peptide_receptor"/>
<dbReference type="GenomeRNAi" id="2925"/>
<dbReference type="Pharos" id="P30550">
    <property type="development level" value="Tchem"/>
</dbReference>
<dbReference type="PRO" id="PR:P30550"/>
<dbReference type="Proteomes" id="UP000005640">
    <property type="component" value="Chromosome X"/>
</dbReference>
<dbReference type="RNAct" id="P30550">
    <property type="molecule type" value="protein"/>
</dbReference>
<dbReference type="Bgee" id="ENSG00000126010">
    <property type="expression patterns" value="Expressed in primordial germ cell in gonad and 67 other cell types or tissues"/>
</dbReference>
<dbReference type="ExpressionAtlas" id="P30550">
    <property type="expression patterns" value="baseline and differential"/>
</dbReference>
<dbReference type="GO" id="GO:0005886">
    <property type="term" value="C:plasma membrane"/>
    <property type="evidence" value="ECO:0000314"/>
    <property type="project" value="HPA"/>
</dbReference>
<dbReference type="GO" id="GO:0008528">
    <property type="term" value="F:G protein-coupled peptide receptor activity"/>
    <property type="evidence" value="ECO:0000314"/>
    <property type="project" value="UniProtKB"/>
</dbReference>
<dbReference type="GO" id="GO:0042923">
    <property type="term" value="F:neuropeptide binding"/>
    <property type="evidence" value="ECO:0007669"/>
    <property type="project" value="Ensembl"/>
</dbReference>
<dbReference type="GO" id="GO:0008188">
    <property type="term" value="F:neuropeptide receptor activity"/>
    <property type="evidence" value="ECO:0000250"/>
    <property type="project" value="UniProtKB"/>
</dbReference>
<dbReference type="GO" id="GO:0007186">
    <property type="term" value="P:G protein-coupled receptor signaling pathway"/>
    <property type="evidence" value="ECO:0000318"/>
    <property type="project" value="GO_Central"/>
</dbReference>
<dbReference type="GO" id="GO:0007611">
    <property type="term" value="P:learning or memory"/>
    <property type="evidence" value="ECO:0007669"/>
    <property type="project" value="Ensembl"/>
</dbReference>
<dbReference type="GO" id="GO:0061744">
    <property type="term" value="P:motor behavior"/>
    <property type="evidence" value="ECO:0000250"/>
    <property type="project" value="UniProtKB"/>
</dbReference>
<dbReference type="GO" id="GO:0007200">
    <property type="term" value="P:phospholipase C-activating G protein-coupled receptor signaling pathway"/>
    <property type="evidence" value="ECO:0000250"/>
    <property type="project" value="UniProtKB"/>
</dbReference>
<dbReference type="GO" id="GO:2000987">
    <property type="term" value="P:positive regulation of behavioral fear response"/>
    <property type="evidence" value="ECO:0000250"/>
    <property type="project" value="UniProtKB"/>
</dbReference>
<dbReference type="GO" id="GO:1903942">
    <property type="term" value="P:positive regulation of respiratory gaseous exchange"/>
    <property type="evidence" value="ECO:0000250"/>
    <property type="project" value="UniProtKB"/>
</dbReference>
<dbReference type="GO" id="GO:0036343">
    <property type="term" value="P:psychomotor behavior"/>
    <property type="evidence" value="ECO:0007669"/>
    <property type="project" value="Ensembl"/>
</dbReference>
<dbReference type="GO" id="GO:0042127">
    <property type="term" value="P:regulation of cell population proliferation"/>
    <property type="evidence" value="ECO:0007669"/>
    <property type="project" value="Ensembl"/>
</dbReference>
<dbReference type="GO" id="GO:0043207">
    <property type="term" value="P:response to external biotic stimulus"/>
    <property type="evidence" value="ECO:0007669"/>
    <property type="project" value="Ensembl"/>
</dbReference>
<dbReference type="GO" id="GO:0035176">
    <property type="term" value="P:social behavior"/>
    <property type="evidence" value="ECO:0000250"/>
    <property type="project" value="UniProtKB"/>
</dbReference>
<dbReference type="CDD" id="cd15124">
    <property type="entry name" value="7tmA_GRPR"/>
    <property type="match status" value="1"/>
</dbReference>
<dbReference type="FunFam" id="1.20.1070.10:FF:000122">
    <property type="entry name" value="Gastrin-releasing peptide receptor"/>
    <property type="match status" value="1"/>
</dbReference>
<dbReference type="Gene3D" id="1.20.1070.10">
    <property type="entry name" value="Rhodopsin 7-helix transmembrane proteins"/>
    <property type="match status" value="1"/>
</dbReference>
<dbReference type="InterPro" id="IPR001556">
    <property type="entry name" value="Bombsn_rcpt-like"/>
</dbReference>
<dbReference type="InterPro" id="IPR001966">
    <property type="entry name" value="Gastrin_pep_rcpt"/>
</dbReference>
<dbReference type="InterPro" id="IPR000276">
    <property type="entry name" value="GPCR_Rhodpsn"/>
</dbReference>
<dbReference type="InterPro" id="IPR017452">
    <property type="entry name" value="GPCR_Rhodpsn_7TM"/>
</dbReference>
<dbReference type="PANTHER" id="PTHR45695:SF7">
    <property type="entry name" value="GASTRIN-RELEASING PEPTIDE RECEPTOR"/>
    <property type="match status" value="1"/>
</dbReference>
<dbReference type="PANTHER" id="PTHR45695">
    <property type="entry name" value="LEUCOKININ RECEPTOR-RELATED"/>
    <property type="match status" value="1"/>
</dbReference>
<dbReference type="Pfam" id="PF00001">
    <property type="entry name" value="7tm_1"/>
    <property type="match status" value="1"/>
</dbReference>
<dbReference type="PRINTS" id="PR00358">
    <property type="entry name" value="BOMBESINR"/>
</dbReference>
<dbReference type="PRINTS" id="PR00640">
    <property type="entry name" value="GASTRINRELPR"/>
</dbReference>
<dbReference type="PRINTS" id="PR00237">
    <property type="entry name" value="GPCRRHODOPSN"/>
</dbReference>
<dbReference type="SMART" id="SM01381">
    <property type="entry name" value="7TM_GPCR_Srsx"/>
    <property type="match status" value="1"/>
</dbReference>
<dbReference type="SUPFAM" id="SSF81321">
    <property type="entry name" value="Family A G protein-coupled receptor-like"/>
    <property type="match status" value="1"/>
</dbReference>
<dbReference type="PROSITE" id="PS00237">
    <property type="entry name" value="G_PROTEIN_RECEP_F1_1"/>
    <property type="match status" value="1"/>
</dbReference>
<dbReference type="PROSITE" id="PS50262">
    <property type="entry name" value="G_PROTEIN_RECEP_F1_2"/>
    <property type="match status" value="1"/>
</dbReference>
<organism>
    <name type="scientific">Homo sapiens</name>
    <name type="common">Human</name>
    <dbReference type="NCBI Taxonomy" id="9606"/>
    <lineage>
        <taxon>Eukaryota</taxon>
        <taxon>Metazoa</taxon>
        <taxon>Chordata</taxon>
        <taxon>Craniata</taxon>
        <taxon>Vertebrata</taxon>
        <taxon>Euteleostomi</taxon>
        <taxon>Mammalia</taxon>
        <taxon>Eutheria</taxon>
        <taxon>Euarchontoglires</taxon>
        <taxon>Primates</taxon>
        <taxon>Haplorrhini</taxon>
        <taxon>Catarrhini</taxon>
        <taxon>Hominidae</taxon>
        <taxon>Homo</taxon>
    </lineage>
</organism>
<feature type="chain" id="PRO_0000069662" description="Gastrin-releasing peptide receptor">
    <location>
        <begin position="1"/>
        <end position="384"/>
    </location>
</feature>
<feature type="topological domain" description="Extracellular" evidence="4">
    <location>
        <begin position="1"/>
        <end position="38"/>
    </location>
</feature>
<feature type="transmembrane region" description="Helical; Name=1" evidence="4">
    <location>
        <begin position="39"/>
        <end position="62"/>
    </location>
</feature>
<feature type="topological domain" description="Cytoplasmic" evidence="4">
    <location>
        <begin position="63"/>
        <end position="76"/>
    </location>
</feature>
<feature type="transmembrane region" description="Helical; Name=2" evidence="4">
    <location>
        <begin position="77"/>
        <end position="96"/>
    </location>
</feature>
<feature type="topological domain" description="Extracellular" evidence="4">
    <location>
        <begin position="97"/>
        <end position="114"/>
    </location>
</feature>
<feature type="transmembrane region" description="Helical; Name=3" evidence="4">
    <location>
        <begin position="115"/>
        <end position="136"/>
    </location>
</feature>
<feature type="topological domain" description="Cytoplasmic" evidence="4">
    <location>
        <begin position="137"/>
        <end position="152"/>
    </location>
</feature>
<feature type="transmembrane region" description="Helical; Name=4" evidence="4">
    <location>
        <begin position="153"/>
        <end position="174"/>
    </location>
</feature>
<feature type="topological domain" description="Extracellular" evidence="4">
    <location>
        <begin position="175"/>
        <end position="208"/>
    </location>
</feature>
<feature type="transmembrane region" description="Helical; Name=5" evidence="4">
    <location>
        <begin position="209"/>
        <end position="234"/>
    </location>
</feature>
<feature type="topological domain" description="Cytoplasmic" evidence="4">
    <location>
        <begin position="235"/>
        <end position="264"/>
    </location>
</feature>
<feature type="transmembrane region" description="Helical; Name=6" evidence="4">
    <location>
        <begin position="265"/>
        <end position="285"/>
    </location>
</feature>
<feature type="topological domain" description="Extracellular" evidence="4">
    <location>
        <begin position="286"/>
        <end position="298"/>
    </location>
</feature>
<feature type="transmembrane region" description="Helical; Name=7" evidence="4">
    <location>
        <begin position="299"/>
        <end position="325"/>
    </location>
</feature>
<feature type="topological domain" description="Cytoplasmic" evidence="4">
    <location>
        <begin position="326"/>
        <end position="384"/>
    </location>
</feature>
<feature type="modified residue" description="Phosphoserine" evidence="2">
    <location>
        <position position="350"/>
    </location>
</feature>
<feature type="lipid moiety-binding region" description="S-palmitoyl cysteine" evidence="1">
    <location>
        <position position="339"/>
    </location>
</feature>
<feature type="glycosylation site" description="N-linked (GlcNAc...) asparagine" evidence="4">
    <location>
        <position position="20"/>
    </location>
</feature>
<feature type="disulfide bond" evidence="5">
    <location>
        <begin position="113"/>
        <end position="196"/>
    </location>
</feature>
<feature type="helix" evidence="10">
    <location>
        <begin position="39"/>
        <end position="42"/>
    </location>
</feature>
<feature type="helix" evidence="10">
    <location>
        <begin position="43"/>
        <end position="67"/>
    </location>
</feature>
<feature type="strand" evidence="9">
    <location>
        <begin position="69"/>
        <end position="71"/>
    </location>
</feature>
<feature type="helix" evidence="10">
    <location>
        <begin position="74"/>
        <end position="102"/>
    </location>
</feature>
<feature type="helix" evidence="10">
    <location>
        <begin position="109"/>
        <end position="142"/>
    </location>
</feature>
<feature type="strand" evidence="9">
    <location>
        <begin position="146"/>
        <end position="149"/>
    </location>
</feature>
<feature type="helix" evidence="10">
    <location>
        <begin position="150"/>
        <end position="152"/>
    </location>
</feature>
<feature type="helix" evidence="10">
    <location>
        <begin position="153"/>
        <end position="178"/>
    </location>
</feature>
<feature type="strand" evidence="10">
    <location>
        <begin position="180"/>
        <end position="186"/>
    </location>
</feature>
<feature type="turn" evidence="10">
    <location>
        <begin position="187"/>
        <end position="189"/>
    </location>
</feature>
<feature type="strand" evidence="10">
    <location>
        <begin position="190"/>
        <end position="197"/>
    </location>
</feature>
<feature type="helix" evidence="10">
    <location>
        <begin position="205"/>
        <end position="218"/>
    </location>
</feature>
<feature type="helix" evidence="10">
    <location>
        <begin position="220"/>
        <end position="239"/>
    </location>
</feature>
<feature type="helix" evidence="9">
    <location>
        <begin position="250"/>
        <end position="252"/>
    </location>
</feature>
<feature type="helix" evidence="10">
    <location>
        <begin position="254"/>
        <end position="290"/>
    </location>
</feature>
<feature type="strand" evidence="10">
    <location>
        <begin position="291"/>
        <end position="293"/>
    </location>
</feature>
<feature type="helix" evidence="10">
    <location>
        <begin position="298"/>
        <end position="325"/>
    </location>
</feature>
<feature type="helix" evidence="10">
    <location>
        <begin position="327"/>
        <end position="336"/>
    </location>
</feature>
<accession>P30550</accession>
<accession>B2R910</accession>
<name>GRPR_HUMAN</name>
<reference key="1">
    <citation type="journal article" date="1991" name="J. Biol. Chem.">
        <title>Two distinct bombesin receptor subtypes are expressed and functional in human lung carcinoma cells.</title>
        <authorList>
            <person name="Corjay M.H."/>
            <person name="Dobrzanski D.J."/>
            <person name="Way J.M."/>
            <person name="Viallet J."/>
            <person name="Shapira H."/>
            <person name="Worland P."/>
            <person name="Sausville E.A."/>
            <person name="Battey J.F."/>
        </authorList>
    </citation>
    <scope>NUCLEOTIDE SEQUENCE [MRNA]</scope>
    <scope>FUNCTION</scope>
    <scope>SUBCELLULAR LOCATION</scope>
    <source>
        <tissue>Lung</tissue>
    </source>
</reference>
<reference key="2">
    <citation type="journal article" date="2001" name="Gene">
        <title>The human gastrin-releasing peptide receptor gene structure, its tissue expression and promoter.</title>
        <authorList>
            <person name="Xiao D."/>
            <person name="Wang J."/>
            <person name="Hampton L.L."/>
            <person name="Weber H.C."/>
        </authorList>
    </citation>
    <scope>NUCLEOTIDE SEQUENCE [GENOMIC DNA]</scope>
    <scope>TISSUE SPECIFICITY</scope>
</reference>
<reference key="3">
    <citation type="journal article" date="2004" name="Nat. Genet.">
        <title>Complete sequencing and characterization of 21,243 full-length human cDNAs.</title>
        <authorList>
            <person name="Ota T."/>
            <person name="Suzuki Y."/>
            <person name="Nishikawa T."/>
            <person name="Otsuki T."/>
            <person name="Sugiyama T."/>
            <person name="Irie R."/>
            <person name="Wakamatsu A."/>
            <person name="Hayashi K."/>
            <person name="Sato H."/>
            <person name="Nagai K."/>
            <person name="Kimura K."/>
            <person name="Makita H."/>
            <person name="Sekine M."/>
            <person name="Obayashi M."/>
            <person name="Nishi T."/>
            <person name="Shibahara T."/>
            <person name="Tanaka T."/>
            <person name="Ishii S."/>
            <person name="Yamamoto J."/>
            <person name="Saito K."/>
            <person name="Kawai Y."/>
            <person name="Isono Y."/>
            <person name="Nakamura Y."/>
            <person name="Nagahari K."/>
            <person name="Murakami K."/>
            <person name="Yasuda T."/>
            <person name="Iwayanagi T."/>
            <person name="Wagatsuma M."/>
            <person name="Shiratori A."/>
            <person name="Sudo H."/>
            <person name="Hosoiri T."/>
            <person name="Kaku Y."/>
            <person name="Kodaira H."/>
            <person name="Kondo H."/>
            <person name="Sugawara M."/>
            <person name="Takahashi M."/>
            <person name="Kanda K."/>
            <person name="Yokoi T."/>
            <person name="Furuya T."/>
            <person name="Kikkawa E."/>
            <person name="Omura Y."/>
            <person name="Abe K."/>
            <person name="Kamihara K."/>
            <person name="Katsuta N."/>
            <person name="Sato K."/>
            <person name="Tanikawa M."/>
            <person name="Yamazaki M."/>
            <person name="Ninomiya K."/>
            <person name="Ishibashi T."/>
            <person name="Yamashita H."/>
            <person name="Murakawa K."/>
            <person name="Fujimori K."/>
            <person name="Tanai H."/>
            <person name="Kimata M."/>
            <person name="Watanabe M."/>
            <person name="Hiraoka S."/>
            <person name="Chiba Y."/>
            <person name="Ishida S."/>
            <person name="Ono Y."/>
            <person name="Takiguchi S."/>
            <person name="Watanabe S."/>
            <person name="Yosida M."/>
            <person name="Hotuta T."/>
            <person name="Kusano J."/>
            <person name="Kanehori K."/>
            <person name="Takahashi-Fujii A."/>
            <person name="Hara H."/>
            <person name="Tanase T.-O."/>
            <person name="Nomura Y."/>
            <person name="Togiya S."/>
            <person name="Komai F."/>
            <person name="Hara R."/>
            <person name="Takeuchi K."/>
            <person name="Arita M."/>
            <person name="Imose N."/>
            <person name="Musashino K."/>
            <person name="Yuuki H."/>
            <person name="Oshima A."/>
            <person name="Sasaki N."/>
            <person name="Aotsuka S."/>
            <person name="Yoshikawa Y."/>
            <person name="Matsunawa H."/>
            <person name="Ichihara T."/>
            <person name="Shiohata N."/>
            <person name="Sano S."/>
            <person name="Moriya S."/>
            <person name="Momiyama H."/>
            <person name="Satoh N."/>
            <person name="Takami S."/>
            <person name="Terashima Y."/>
            <person name="Suzuki O."/>
            <person name="Nakagawa S."/>
            <person name="Senoh A."/>
            <person name="Mizoguchi H."/>
            <person name="Goto Y."/>
            <person name="Shimizu F."/>
            <person name="Wakebe H."/>
            <person name="Hishigaki H."/>
            <person name="Watanabe T."/>
            <person name="Sugiyama A."/>
            <person name="Takemoto M."/>
            <person name="Kawakami B."/>
            <person name="Yamazaki M."/>
            <person name="Watanabe K."/>
            <person name="Kumagai A."/>
            <person name="Itakura S."/>
            <person name="Fukuzumi Y."/>
            <person name="Fujimori Y."/>
            <person name="Komiyama M."/>
            <person name="Tashiro H."/>
            <person name="Tanigami A."/>
            <person name="Fujiwara T."/>
            <person name="Ono T."/>
            <person name="Yamada K."/>
            <person name="Fujii Y."/>
            <person name="Ozaki K."/>
            <person name="Hirao M."/>
            <person name="Ohmori Y."/>
            <person name="Kawabata A."/>
            <person name="Hikiji T."/>
            <person name="Kobatake N."/>
            <person name="Inagaki H."/>
            <person name="Ikema Y."/>
            <person name="Okamoto S."/>
            <person name="Okitani R."/>
            <person name="Kawakami T."/>
            <person name="Noguchi S."/>
            <person name="Itoh T."/>
            <person name="Shigeta K."/>
            <person name="Senba T."/>
            <person name="Matsumura K."/>
            <person name="Nakajima Y."/>
            <person name="Mizuno T."/>
            <person name="Morinaga M."/>
            <person name="Sasaki M."/>
            <person name="Togashi T."/>
            <person name="Oyama M."/>
            <person name="Hata H."/>
            <person name="Watanabe M."/>
            <person name="Komatsu T."/>
            <person name="Mizushima-Sugano J."/>
            <person name="Satoh T."/>
            <person name="Shirai Y."/>
            <person name="Takahashi Y."/>
            <person name="Nakagawa K."/>
            <person name="Okumura K."/>
            <person name="Nagase T."/>
            <person name="Nomura N."/>
            <person name="Kikuchi H."/>
            <person name="Masuho Y."/>
            <person name="Yamashita R."/>
            <person name="Nakai K."/>
            <person name="Yada T."/>
            <person name="Nakamura Y."/>
            <person name="Ohara O."/>
            <person name="Isogai T."/>
            <person name="Sugano S."/>
        </authorList>
    </citation>
    <scope>NUCLEOTIDE SEQUENCE [LARGE SCALE MRNA]</scope>
    <source>
        <tissue>Mammary gland</tissue>
    </source>
</reference>
<reference key="4">
    <citation type="submission" date="2005-07" db="EMBL/GenBank/DDBJ databases">
        <authorList>
            <person name="Mural R.J."/>
            <person name="Istrail S."/>
            <person name="Sutton G.G."/>
            <person name="Florea L."/>
            <person name="Halpern A.L."/>
            <person name="Mobarry C.M."/>
            <person name="Lippert R."/>
            <person name="Walenz B."/>
            <person name="Shatkay H."/>
            <person name="Dew I."/>
            <person name="Miller J.R."/>
            <person name="Flanigan M.J."/>
            <person name="Edwards N.J."/>
            <person name="Bolanos R."/>
            <person name="Fasulo D."/>
            <person name="Halldorsson B.V."/>
            <person name="Hannenhalli S."/>
            <person name="Turner R."/>
            <person name="Yooseph S."/>
            <person name="Lu F."/>
            <person name="Nusskern D.R."/>
            <person name="Shue B.C."/>
            <person name="Zheng X.H."/>
            <person name="Zhong F."/>
            <person name="Delcher A.L."/>
            <person name="Huson D.H."/>
            <person name="Kravitz S.A."/>
            <person name="Mouchard L."/>
            <person name="Reinert K."/>
            <person name="Remington K.A."/>
            <person name="Clark A.G."/>
            <person name="Waterman M.S."/>
            <person name="Eichler E.E."/>
            <person name="Adams M.D."/>
            <person name="Hunkapiller M.W."/>
            <person name="Myers E.W."/>
            <person name="Venter J.C."/>
        </authorList>
    </citation>
    <scope>NUCLEOTIDE SEQUENCE [LARGE SCALE GENOMIC DNA]</scope>
</reference>
<reference key="5">
    <citation type="journal article" date="2004" name="Genome Res.">
        <title>The status, quality, and expansion of the NIH full-length cDNA project: the Mammalian Gene Collection (MGC).</title>
        <authorList>
            <consortium name="The MGC Project Team"/>
        </authorList>
    </citation>
    <scope>NUCLEOTIDE SEQUENCE [LARGE SCALE MRNA]</scope>
    <source>
        <tissue>Brain</tissue>
    </source>
</reference>
<reference key="6">
    <citation type="journal article" date="2021" name="Cell">
        <title>Bombesin-like peptide recruits disinhibitory cortical circuits and enhances fear memories.</title>
        <authorList>
            <person name="Melzer S."/>
            <person name="Newmark E.R."/>
            <person name="Mizuno G.O."/>
            <person name="Hyun M."/>
            <person name="Philson A.C."/>
            <person name="Quiroli E."/>
            <person name="Righetti B."/>
            <person name="Gregory M.R."/>
            <person name="Huang K.W."/>
            <person name="Levasseur J."/>
            <person name="Tian L."/>
            <person name="Sabatini B.L."/>
        </authorList>
    </citation>
    <scope>TISSUE SPECIFICITY</scope>
</reference>
<protein>
    <recommendedName>
        <fullName>Gastrin-releasing peptide receptor</fullName>
        <shortName>GRP-R</shortName>
    </recommendedName>
    <alternativeName>
        <fullName>GRP-preferring bombesin receptor</fullName>
    </alternativeName>
</protein>